<accession>Q97QC6</accession>
<reference key="1">
    <citation type="journal article" date="2001" name="Science">
        <title>Complete genome sequence of a virulent isolate of Streptococcus pneumoniae.</title>
        <authorList>
            <person name="Tettelin H."/>
            <person name="Nelson K.E."/>
            <person name="Paulsen I.T."/>
            <person name="Eisen J.A."/>
            <person name="Read T.D."/>
            <person name="Peterson S.N."/>
            <person name="Heidelberg J.F."/>
            <person name="DeBoy R.T."/>
            <person name="Haft D.H."/>
            <person name="Dodson R.J."/>
            <person name="Durkin A.S."/>
            <person name="Gwinn M.L."/>
            <person name="Kolonay J.F."/>
            <person name="Nelson W.C."/>
            <person name="Peterson J.D."/>
            <person name="Umayam L.A."/>
            <person name="White O."/>
            <person name="Salzberg S.L."/>
            <person name="Lewis M.R."/>
            <person name="Radune D."/>
            <person name="Holtzapple E.K."/>
            <person name="Khouri H.M."/>
            <person name="Wolf A.M."/>
            <person name="Utterback T.R."/>
            <person name="Hansen C.L."/>
            <person name="McDonald L.A."/>
            <person name="Feldblyum T.V."/>
            <person name="Angiuoli S.V."/>
            <person name="Dickinson T."/>
            <person name="Hickey E.K."/>
            <person name="Holt I.E."/>
            <person name="Loftus B.J."/>
            <person name="Yang F."/>
            <person name="Smith H.O."/>
            <person name="Venter J.C."/>
            <person name="Dougherty B.A."/>
            <person name="Morrison D.A."/>
            <person name="Hollingshead S.K."/>
            <person name="Fraser C.M."/>
        </authorList>
    </citation>
    <scope>NUCLEOTIDE SEQUENCE [LARGE SCALE GENOMIC DNA]</scope>
    <source>
        <strain>ATCC BAA-334 / TIGR4</strain>
    </source>
</reference>
<evidence type="ECO:0000255" key="1">
    <source>
        <dbReference type="HAMAP-Rule" id="MF_00402"/>
    </source>
</evidence>
<evidence type="ECO:0000305" key="2"/>
<organism>
    <name type="scientific">Streptococcus pneumoniae serotype 4 (strain ATCC BAA-334 / TIGR4)</name>
    <dbReference type="NCBI Taxonomy" id="170187"/>
    <lineage>
        <taxon>Bacteria</taxon>
        <taxon>Bacillati</taxon>
        <taxon>Bacillota</taxon>
        <taxon>Bacilli</taxon>
        <taxon>Lactobacillales</taxon>
        <taxon>Streptococcaceae</taxon>
        <taxon>Streptococcus</taxon>
    </lineage>
</organism>
<name>RL19_STRPN</name>
<dbReference type="EMBL" id="AE005672">
    <property type="protein sequence ID" value="AAK75397.1"/>
    <property type="molecule type" value="Genomic_DNA"/>
</dbReference>
<dbReference type="PIR" id="D95150">
    <property type="entry name" value="D95150"/>
</dbReference>
<dbReference type="RefSeq" id="WP_001068669.1">
    <property type="nucleotide sequence ID" value="NZ_CP155539.1"/>
</dbReference>
<dbReference type="SMR" id="Q97QC6"/>
<dbReference type="PaxDb" id="170187-SP_1293"/>
<dbReference type="EnsemblBacteria" id="AAK75397">
    <property type="protein sequence ID" value="AAK75397"/>
    <property type="gene ID" value="SP_1293"/>
</dbReference>
<dbReference type="GeneID" id="93739485"/>
<dbReference type="KEGG" id="spn:SP_1293"/>
<dbReference type="eggNOG" id="COG0335">
    <property type="taxonomic scope" value="Bacteria"/>
</dbReference>
<dbReference type="PhylomeDB" id="Q97QC6"/>
<dbReference type="BioCyc" id="SPNE170187:G1FZB-1307-MONOMER"/>
<dbReference type="Proteomes" id="UP000000585">
    <property type="component" value="Chromosome"/>
</dbReference>
<dbReference type="GO" id="GO:0022625">
    <property type="term" value="C:cytosolic large ribosomal subunit"/>
    <property type="evidence" value="ECO:0007669"/>
    <property type="project" value="TreeGrafter"/>
</dbReference>
<dbReference type="GO" id="GO:0003735">
    <property type="term" value="F:structural constituent of ribosome"/>
    <property type="evidence" value="ECO:0007669"/>
    <property type="project" value="InterPro"/>
</dbReference>
<dbReference type="GO" id="GO:0006412">
    <property type="term" value="P:translation"/>
    <property type="evidence" value="ECO:0007669"/>
    <property type="project" value="UniProtKB-UniRule"/>
</dbReference>
<dbReference type="FunFam" id="2.30.30.790:FF:000001">
    <property type="entry name" value="50S ribosomal protein L19"/>
    <property type="match status" value="1"/>
</dbReference>
<dbReference type="Gene3D" id="2.30.30.790">
    <property type="match status" value="1"/>
</dbReference>
<dbReference type="HAMAP" id="MF_00402">
    <property type="entry name" value="Ribosomal_bL19"/>
    <property type="match status" value="1"/>
</dbReference>
<dbReference type="InterPro" id="IPR001857">
    <property type="entry name" value="Ribosomal_bL19"/>
</dbReference>
<dbReference type="InterPro" id="IPR018257">
    <property type="entry name" value="Ribosomal_bL19_CS"/>
</dbReference>
<dbReference type="InterPro" id="IPR038657">
    <property type="entry name" value="Ribosomal_bL19_sf"/>
</dbReference>
<dbReference type="InterPro" id="IPR008991">
    <property type="entry name" value="Translation_prot_SH3-like_sf"/>
</dbReference>
<dbReference type="NCBIfam" id="TIGR01024">
    <property type="entry name" value="rplS_bact"/>
    <property type="match status" value="1"/>
</dbReference>
<dbReference type="PANTHER" id="PTHR15680:SF9">
    <property type="entry name" value="LARGE RIBOSOMAL SUBUNIT PROTEIN BL19M"/>
    <property type="match status" value="1"/>
</dbReference>
<dbReference type="PANTHER" id="PTHR15680">
    <property type="entry name" value="RIBOSOMAL PROTEIN L19"/>
    <property type="match status" value="1"/>
</dbReference>
<dbReference type="Pfam" id="PF01245">
    <property type="entry name" value="Ribosomal_L19"/>
    <property type="match status" value="1"/>
</dbReference>
<dbReference type="PIRSF" id="PIRSF002191">
    <property type="entry name" value="Ribosomal_L19"/>
    <property type="match status" value="1"/>
</dbReference>
<dbReference type="PRINTS" id="PR00061">
    <property type="entry name" value="RIBOSOMALL19"/>
</dbReference>
<dbReference type="SUPFAM" id="SSF50104">
    <property type="entry name" value="Translation proteins SH3-like domain"/>
    <property type="match status" value="1"/>
</dbReference>
<dbReference type="PROSITE" id="PS01015">
    <property type="entry name" value="RIBOSOMAL_L19"/>
    <property type="match status" value="1"/>
</dbReference>
<sequence>MNPLIQSLTEGQLRTDIPSFRPGDTVRVHAKVVEGNRERIQIFEGVVIARKGAGISENYTVRKISNGVGVERIFPIHTPRVEKIEVVRYGKVRRAKLYYLRALQGKAARIKEIRR</sequence>
<gene>
    <name evidence="1" type="primary">rplS</name>
    <name type="ordered locus">SP_1293</name>
</gene>
<feature type="chain" id="PRO_0000163542" description="Large ribosomal subunit protein bL19">
    <location>
        <begin position="1"/>
        <end position="115"/>
    </location>
</feature>
<keyword id="KW-1185">Reference proteome</keyword>
<keyword id="KW-0687">Ribonucleoprotein</keyword>
<keyword id="KW-0689">Ribosomal protein</keyword>
<protein>
    <recommendedName>
        <fullName evidence="1">Large ribosomal subunit protein bL19</fullName>
    </recommendedName>
    <alternativeName>
        <fullName evidence="2">50S ribosomal protein L19</fullName>
    </alternativeName>
</protein>
<comment type="function">
    <text evidence="1">This protein is located at the 30S-50S ribosomal subunit interface and may play a role in the structure and function of the aminoacyl-tRNA binding site.</text>
</comment>
<comment type="similarity">
    <text evidence="1">Belongs to the bacterial ribosomal protein bL19 family.</text>
</comment>
<proteinExistence type="inferred from homology"/>